<accession>Q97PK0</accession>
<protein>
    <recommendedName>
        <fullName>GTP cyclohydrolase 1 type 2 homolog</fullName>
    </recommendedName>
</protein>
<organism>
    <name type="scientific">Streptococcus pneumoniae serotype 4 (strain ATCC BAA-334 / TIGR4)</name>
    <dbReference type="NCBI Taxonomy" id="170187"/>
    <lineage>
        <taxon>Bacteria</taxon>
        <taxon>Bacillati</taxon>
        <taxon>Bacillota</taxon>
        <taxon>Bacilli</taxon>
        <taxon>Lactobacillales</taxon>
        <taxon>Streptococcaceae</taxon>
        <taxon>Streptococcus</taxon>
    </lineage>
</organism>
<dbReference type="EMBL" id="AE005672">
    <property type="protein sequence ID" value="AAK75693.1"/>
    <property type="molecule type" value="Genomic_DNA"/>
</dbReference>
<dbReference type="PIR" id="D95187">
    <property type="entry name" value="D95187"/>
</dbReference>
<dbReference type="RefSeq" id="WP_000881169.1">
    <property type="nucleotide sequence ID" value="NC_003028.3"/>
</dbReference>
<dbReference type="PDB" id="2FYW">
    <property type="method" value="X-ray"/>
    <property type="resolution" value="2.40 A"/>
    <property type="chains" value="A/B/C=1-265"/>
</dbReference>
<dbReference type="PDBsum" id="2FYW"/>
<dbReference type="SMR" id="Q97PK0"/>
<dbReference type="PaxDb" id="170187-SP_1609"/>
<dbReference type="EnsemblBacteria" id="AAK75693">
    <property type="protein sequence ID" value="AAK75693"/>
    <property type="gene ID" value="SP_1609"/>
</dbReference>
<dbReference type="KEGG" id="spn:SP_1609"/>
<dbReference type="eggNOG" id="COG0327">
    <property type="taxonomic scope" value="Bacteria"/>
</dbReference>
<dbReference type="PhylomeDB" id="Q97PK0"/>
<dbReference type="BioCyc" id="SPNE170187:G1FZB-1630-MONOMER"/>
<dbReference type="EvolutionaryTrace" id="Q97PK0"/>
<dbReference type="Proteomes" id="UP000000585">
    <property type="component" value="Chromosome"/>
</dbReference>
<dbReference type="GO" id="GO:0005737">
    <property type="term" value="C:cytoplasm"/>
    <property type="evidence" value="ECO:0007669"/>
    <property type="project" value="TreeGrafter"/>
</dbReference>
<dbReference type="GO" id="GO:0046872">
    <property type="term" value="F:metal ion binding"/>
    <property type="evidence" value="ECO:0007669"/>
    <property type="project" value="UniProtKB-KW"/>
</dbReference>
<dbReference type="FunFam" id="3.40.1390.30:FF:000006">
    <property type="entry name" value="Dinuclear metal center protein, YbgI family"/>
    <property type="match status" value="1"/>
</dbReference>
<dbReference type="Gene3D" id="3.40.1390.30">
    <property type="entry name" value="NIF3 (NGG1p interacting factor 3)-like"/>
    <property type="match status" value="2"/>
</dbReference>
<dbReference type="InterPro" id="IPR002678">
    <property type="entry name" value="DUF34/NIF3"/>
</dbReference>
<dbReference type="InterPro" id="IPR036069">
    <property type="entry name" value="DUF34/NIF3_sf"/>
</dbReference>
<dbReference type="NCBIfam" id="TIGR00486">
    <property type="entry name" value="YbgI_SA1388"/>
    <property type="match status" value="1"/>
</dbReference>
<dbReference type="PANTHER" id="PTHR13799:SF14">
    <property type="entry name" value="GTP CYCLOHYDROLASE 1 TYPE 2 HOMOLOG"/>
    <property type="match status" value="1"/>
</dbReference>
<dbReference type="PANTHER" id="PTHR13799">
    <property type="entry name" value="NGG1 INTERACTING FACTOR 3"/>
    <property type="match status" value="1"/>
</dbReference>
<dbReference type="Pfam" id="PF01784">
    <property type="entry name" value="DUF34_NIF3"/>
    <property type="match status" value="1"/>
</dbReference>
<dbReference type="SUPFAM" id="SSF102705">
    <property type="entry name" value="NIF3 (NGG1p interacting factor 3)-like"/>
    <property type="match status" value="1"/>
</dbReference>
<proteinExistence type="evidence at protein level"/>
<sequence length="265" mass="29823">MLASEVIQAYEAFCPQEFSMEGDSRGLQIGTLDKGIQRVMVALDIREETVAEAIEKGVDLIIVKHAPIFRPIKDLLASRPQNQIYIDLIKHDIAVYVSHTNIDIVENGLNDWFCQMLGIEETTYLQETGPERGIGRIGNIQPQTFWELAQQVKQVFDLDSLRMVHYQEDDLQKPISRVAICGGSGQSFYKDALAKGADVYITGDIYYHTAQDMLSDGLLALDPGHYIEVIFVEKIAALLSQWKEDKGWSIDILPSQASTNPFHHI</sequence>
<gene>
    <name type="ordered locus">SP_1609</name>
</gene>
<comment type="subunit">
    <text evidence="2">Homohexamer.</text>
</comment>
<comment type="similarity">
    <text evidence="3">Belongs to the GTP cyclohydrolase I type 2/NIF3 family.</text>
</comment>
<reference key="1">
    <citation type="journal article" date="2001" name="Science">
        <title>Complete genome sequence of a virulent isolate of Streptococcus pneumoniae.</title>
        <authorList>
            <person name="Tettelin H."/>
            <person name="Nelson K.E."/>
            <person name="Paulsen I.T."/>
            <person name="Eisen J.A."/>
            <person name="Read T.D."/>
            <person name="Peterson S.N."/>
            <person name="Heidelberg J.F."/>
            <person name="DeBoy R.T."/>
            <person name="Haft D.H."/>
            <person name="Dodson R.J."/>
            <person name="Durkin A.S."/>
            <person name="Gwinn M.L."/>
            <person name="Kolonay J.F."/>
            <person name="Nelson W.C."/>
            <person name="Peterson J.D."/>
            <person name="Umayam L.A."/>
            <person name="White O."/>
            <person name="Salzberg S.L."/>
            <person name="Lewis M.R."/>
            <person name="Radune D."/>
            <person name="Holtzapple E.K."/>
            <person name="Khouri H.M."/>
            <person name="Wolf A.M."/>
            <person name="Utterback T.R."/>
            <person name="Hansen C.L."/>
            <person name="McDonald L.A."/>
            <person name="Feldblyum T.V."/>
            <person name="Angiuoli S.V."/>
            <person name="Dickinson T."/>
            <person name="Hickey E.K."/>
            <person name="Holt I.E."/>
            <person name="Loftus B.J."/>
            <person name="Yang F."/>
            <person name="Smith H.O."/>
            <person name="Venter J.C."/>
            <person name="Dougherty B.A."/>
            <person name="Morrison D.A."/>
            <person name="Hollingshead S.K."/>
            <person name="Fraser C.M."/>
        </authorList>
    </citation>
    <scope>NUCLEOTIDE SEQUENCE [LARGE SCALE GENOMIC DNA]</scope>
    <source>
        <strain>ATCC BAA-334 / TIGR4</strain>
    </source>
</reference>
<reference key="2">
    <citation type="submission" date="2011-07" db="PDB data bank">
        <title>Crystal structure of a conserved hypothetical protein from Streptococcus pneumoniae TIGR4.</title>
        <authorList>
            <consortium name="Midwest center for structural genomics (MCSG)"/>
        </authorList>
    </citation>
    <scope>X-RAY CRYSTALLOGRAPHY (2.4 ANGSTROMS)</scope>
    <scope>SUBUNIT</scope>
    <source>
        <strain>ATCC BAA-334 / TIGR4</strain>
    </source>
</reference>
<name>GCH1L_STRPN</name>
<evidence type="ECO:0000250" key="1">
    <source>
        <dbReference type="UniProtKB" id="P0AFP6"/>
    </source>
</evidence>
<evidence type="ECO:0000269" key="2">
    <source ref="2"/>
</evidence>
<evidence type="ECO:0000305" key="3"/>
<evidence type="ECO:0007829" key="4">
    <source>
        <dbReference type="PDB" id="2FYW"/>
    </source>
</evidence>
<keyword id="KW-0002">3D-structure</keyword>
<keyword id="KW-0479">Metal-binding</keyword>
<keyword id="KW-1185">Reference proteome</keyword>
<feature type="chain" id="PRO_0000147336" description="GTP cyclohydrolase 1 type 2 homolog">
    <location>
        <begin position="1"/>
        <end position="265"/>
    </location>
</feature>
<feature type="binding site" evidence="1">
    <location>
        <position position="65"/>
    </location>
    <ligand>
        <name>a divalent metal cation</name>
        <dbReference type="ChEBI" id="CHEBI:60240"/>
        <label>2</label>
    </ligand>
</feature>
<feature type="binding site" evidence="1">
    <location>
        <position position="103"/>
    </location>
    <ligand>
        <name>a divalent metal cation</name>
        <dbReference type="ChEBI" id="CHEBI:60240"/>
        <label>1</label>
    </ligand>
</feature>
<feature type="binding site" evidence="1">
    <location>
        <position position="225"/>
    </location>
    <ligand>
        <name>a divalent metal cation</name>
        <dbReference type="ChEBI" id="CHEBI:60240"/>
        <label>2</label>
    </ligand>
</feature>
<feature type="binding site" evidence="1">
    <location>
        <position position="228"/>
    </location>
    <ligand>
        <name>a divalent metal cation</name>
        <dbReference type="ChEBI" id="CHEBI:60240"/>
        <label>1</label>
    </ligand>
</feature>
<feature type="binding site" evidence="1">
    <location>
        <position position="228"/>
    </location>
    <ligand>
        <name>a divalent metal cation</name>
        <dbReference type="ChEBI" id="CHEBI:60240"/>
        <label>2</label>
    </ligand>
</feature>
<feature type="helix" evidence="4">
    <location>
        <begin position="3"/>
        <end position="13"/>
    </location>
</feature>
<feature type="helix" evidence="4">
    <location>
        <begin position="16"/>
        <end position="18"/>
    </location>
</feature>
<feature type="strand" evidence="4">
    <location>
        <begin position="26"/>
        <end position="30"/>
    </location>
</feature>
<feature type="strand" evidence="4">
    <location>
        <begin position="32"/>
        <end position="35"/>
    </location>
</feature>
<feature type="strand" evidence="4">
    <location>
        <begin position="37"/>
        <end position="43"/>
    </location>
</feature>
<feature type="helix" evidence="4">
    <location>
        <begin position="47"/>
        <end position="55"/>
    </location>
</feature>
<feature type="strand" evidence="4">
    <location>
        <begin position="59"/>
        <end position="65"/>
    </location>
</feature>
<feature type="helix" evidence="4">
    <location>
        <begin position="80"/>
        <end position="90"/>
    </location>
</feature>
<feature type="strand" evidence="4">
    <location>
        <begin position="94"/>
        <end position="97"/>
    </location>
</feature>
<feature type="helix" evidence="4">
    <location>
        <begin position="100"/>
        <end position="104"/>
    </location>
</feature>
<feature type="helix" evidence="4">
    <location>
        <begin position="109"/>
        <end position="117"/>
    </location>
</feature>
<feature type="strand" evidence="4">
    <location>
        <begin position="120"/>
        <end position="129"/>
    </location>
</feature>
<feature type="strand" evidence="4">
    <location>
        <begin position="132"/>
        <end position="144"/>
    </location>
</feature>
<feature type="helix" evidence="4">
    <location>
        <begin position="145"/>
        <end position="155"/>
    </location>
</feature>
<feature type="strand" evidence="4">
    <location>
        <begin position="162"/>
        <end position="164"/>
    </location>
</feature>
<feature type="helix" evidence="4">
    <location>
        <begin position="170"/>
        <end position="172"/>
    </location>
</feature>
<feature type="strand" evidence="4">
    <location>
        <begin position="173"/>
        <end position="184"/>
    </location>
</feature>
<feature type="helix" evidence="4">
    <location>
        <begin position="186"/>
        <end position="188"/>
    </location>
</feature>
<feature type="helix" evidence="4">
    <location>
        <begin position="189"/>
        <end position="194"/>
    </location>
</feature>
<feature type="strand" evidence="4">
    <location>
        <begin position="198"/>
        <end position="203"/>
    </location>
</feature>
<feature type="helix" evidence="4">
    <location>
        <begin position="207"/>
        <end position="215"/>
    </location>
</feature>
<feature type="strand" evidence="4">
    <location>
        <begin position="219"/>
        <end position="222"/>
    </location>
</feature>
<feature type="helix" evidence="4">
    <location>
        <begin position="225"/>
        <end position="229"/>
    </location>
</feature>
<feature type="helix" evidence="4">
    <location>
        <begin position="230"/>
        <end position="246"/>
    </location>
</feature>
<feature type="strand" evidence="4">
    <location>
        <begin position="251"/>
        <end position="254"/>
    </location>
</feature>
<feature type="strand" evidence="4">
    <location>
        <begin position="262"/>
        <end position="264"/>
    </location>
</feature>